<sequence length="87" mass="10077">MTILKNQINKGIIFLIRCYQKYISPMFPPTCRYYPTCSNYAIDAIKKHGIVKGIIMGIFRILRCNPFVEGGVDVVPEKFTIFRNDDK</sequence>
<feature type="chain" id="PRO_0000253118" description="Putative membrane protein insertion efficiency factor">
    <location>
        <begin position="1"/>
        <end position="87"/>
    </location>
</feature>
<evidence type="ECO:0000255" key="1">
    <source>
        <dbReference type="HAMAP-Rule" id="MF_00386"/>
    </source>
</evidence>
<name>YIDD_LIGS1</name>
<protein>
    <recommendedName>
        <fullName evidence="1">Putative membrane protein insertion efficiency factor</fullName>
    </recommendedName>
</protein>
<organism>
    <name type="scientific">Ligilactobacillus salivarius (strain UCC118)</name>
    <name type="common">Lactobacillus salivarius</name>
    <dbReference type="NCBI Taxonomy" id="362948"/>
    <lineage>
        <taxon>Bacteria</taxon>
        <taxon>Bacillati</taxon>
        <taxon>Bacillota</taxon>
        <taxon>Bacilli</taxon>
        <taxon>Lactobacillales</taxon>
        <taxon>Lactobacillaceae</taxon>
        <taxon>Ligilactobacillus</taxon>
    </lineage>
</organism>
<dbReference type="EMBL" id="CP000233">
    <property type="protein sequence ID" value="ABD99414.1"/>
    <property type="molecule type" value="Genomic_DNA"/>
</dbReference>
<dbReference type="RefSeq" id="YP_535497.1">
    <property type="nucleotide sequence ID" value="NC_007929.1"/>
</dbReference>
<dbReference type="STRING" id="362948.LSL_0605"/>
<dbReference type="KEGG" id="lsl:LSL_0605"/>
<dbReference type="PATRIC" id="fig|362948.14.peg.683"/>
<dbReference type="HOGENOM" id="CLU_144811_6_0_9"/>
<dbReference type="OrthoDB" id="9801753at2"/>
<dbReference type="Proteomes" id="UP000006559">
    <property type="component" value="Chromosome"/>
</dbReference>
<dbReference type="GO" id="GO:0005886">
    <property type="term" value="C:plasma membrane"/>
    <property type="evidence" value="ECO:0007669"/>
    <property type="project" value="UniProtKB-SubCell"/>
</dbReference>
<dbReference type="HAMAP" id="MF_00386">
    <property type="entry name" value="UPF0161_YidD"/>
    <property type="match status" value="1"/>
</dbReference>
<dbReference type="InterPro" id="IPR002696">
    <property type="entry name" value="Membr_insert_effic_factor_YidD"/>
</dbReference>
<dbReference type="NCBIfam" id="TIGR00278">
    <property type="entry name" value="membrane protein insertion efficiency factor YidD"/>
    <property type="match status" value="1"/>
</dbReference>
<dbReference type="PANTHER" id="PTHR33383">
    <property type="entry name" value="MEMBRANE PROTEIN INSERTION EFFICIENCY FACTOR-RELATED"/>
    <property type="match status" value="1"/>
</dbReference>
<dbReference type="PANTHER" id="PTHR33383:SF1">
    <property type="entry name" value="MEMBRANE PROTEIN INSERTION EFFICIENCY FACTOR-RELATED"/>
    <property type="match status" value="1"/>
</dbReference>
<dbReference type="Pfam" id="PF01809">
    <property type="entry name" value="YidD"/>
    <property type="match status" value="1"/>
</dbReference>
<dbReference type="SMART" id="SM01234">
    <property type="entry name" value="Haemolytic"/>
    <property type="match status" value="1"/>
</dbReference>
<accession>Q1WUC1</accession>
<gene>
    <name type="ordered locus">LSL_0605</name>
</gene>
<proteinExistence type="inferred from homology"/>
<comment type="function">
    <text evidence="1">Could be involved in insertion of integral membrane proteins into the membrane.</text>
</comment>
<comment type="subcellular location">
    <subcellularLocation>
        <location evidence="1">Cell membrane</location>
        <topology evidence="1">Peripheral membrane protein</topology>
        <orientation evidence="1">Cytoplasmic side</orientation>
    </subcellularLocation>
</comment>
<comment type="similarity">
    <text evidence="1">Belongs to the UPF0161 family.</text>
</comment>
<keyword id="KW-1003">Cell membrane</keyword>
<keyword id="KW-0472">Membrane</keyword>
<keyword id="KW-1185">Reference proteome</keyword>
<reference key="1">
    <citation type="journal article" date="2006" name="Proc. Natl. Acad. Sci. U.S.A.">
        <title>Multireplicon genome architecture of Lactobacillus salivarius.</title>
        <authorList>
            <person name="Claesson M.J."/>
            <person name="Li Y."/>
            <person name="Leahy S."/>
            <person name="Canchaya C."/>
            <person name="van Pijkeren J.P."/>
            <person name="Cerdeno-Tarraga A.M."/>
            <person name="Parkhill J."/>
            <person name="Flynn S."/>
            <person name="O'Sullivan G.C."/>
            <person name="Collins J.K."/>
            <person name="Higgins D."/>
            <person name="Shanahan F."/>
            <person name="Fitzgerald G.F."/>
            <person name="van Sinderen D."/>
            <person name="O'Toole P.W."/>
        </authorList>
    </citation>
    <scope>NUCLEOTIDE SEQUENCE [LARGE SCALE GENOMIC DNA]</scope>
    <source>
        <strain>UCC118</strain>
    </source>
</reference>